<name>LPXH_ECO45</name>
<organism>
    <name type="scientific">Escherichia coli O45:K1 (strain S88 / ExPEC)</name>
    <dbReference type="NCBI Taxonomy" id="585035"/>
    <lineage>
        <taxon>Bacteria</taxon>
        <taxon>Pseudomonadati</taxon>
        <taxon>Pseudomonadota</taxon>
        <taxon>Gammaproteobacteria</taxon>
        <taxon>Enterobacterales</taxon>
        <taxon>Enterobacteriaceae</taxon>
        <taxon>Escherichia</taxon>
    </lineage>
</organism>
<keyword id="KW-0997">Cell inner membrane</keyword>
<keyword id="KW-1003">Cell membrane</keyword>
<keyword id="KW-0378">Hydrolase</keyword>
<keyword id="KW-0441">Lipid A biosynthesis</keyword>
<keyword id="KW-0444">Lipid biosynthesis</keyword>
<keyword id="KW-0443">Lipid metabolism</keyword>
<keyword id="KW-0464">Manganese</keyword>
<keyword id="KW-0472">Membrane</keyword>
<keyword id="KW-0479">Metal-binding</keyword>
<keyword id="KW-1185">Reference proteome</keyword>
<gene>
    <name evidence="1" type="primary">lpxH</name>
    <name type="ordered locus">ECS88_0524</name>
</gene>
<protein>
    <recommendedName>
        <fullName evidence="1">UDP-2,3-diacylglucosamine hydrolase</fullName>
        <ecNumber evidence="1">3.6.1.54</ecNumber>
    </recommendedName>
    <alternativeName>
        <fullName evidence="1">UDP-2,3-diacylglucosamine diphosphatase</fullName>
    </alternativeName>
</protein>
<reference key="1">
    <citation type="journal article" date="2009" name="PLoS Genet.">
        <title>Organised genome dynamics in the Escherichia coli species results in highly diverse adaptive paths.</title>
        <authorList>
            <person name="Touchon M."/>
            <person name="Hoede C."/>
            <person name="Tenaillon O."/>
            <person name="Barbe V."/>
            <person name="Baeriswyl S."/>
            <person name="Bidet P."/>
            <person name="Bingen E."/>
            <person name="Bonacorsi S."/>
            <person name="Bouchier C."/>
            <person name="Bouvet O."/>
            <person name="Calteau A."/>
            <person name="Chiapello H."/>
            <person name="Clermont O."/>
            <person name="Cruveiller S."/>
            <person name="Danchin A."/>
            <person name="Diard M."/>
            <person name="Dossat C."/>
            <person name="Karoui M.E."/>
            <person name="Frapy E."/>
            <person name="Garry L."/>
            <person name="Ghigo J.M."/>
            <person name="Gilles A.M."/>
            <person name="Johnson J."/>
            <person name="Le Bouguenec C."/>
            <person name="Lescat M."/>
            <person name="Mangenot S."/>
            <person name="Martinez-Jehanne V."/>
            <person name="Matic I."/>
            <person name="Nassif X."/>
            <person name="Oztas S."/>
            <person name="Petit M.A."/>
            <person name="Pichon C."/>
            <person name="Rouy Z."/>
            <person name="Ruf C.S."/>
            <person name="Schneider D."/>
            <person name="Tourret J."/>
            <person name="Vacherie B."/>
            <person name="Vallenet D."/>
            <person name="Medigue C."/>
            <person name="Rocha E.P.C."/>
            <person name="Denamur E."/>
        </authorList>
    </citation>
    <scope>NUCLEOTIDE SEQUENCE [LARGE SCALE GENOMIC DNA]</scope>
    <source>
        <strain>S88 / ExPEC</strain>
    </source>
</reference>
<sequence length="240" mass="26875">MATLFIADLHLCVEEPAITAGFLRFLAGEARKADALYILGDLFEAWIGDDDPNPLHHQMAAAIKAVSDSGVPCYFIHGNRDFLLGKRFARESGMTLLPEEKVLELYGRRVLIMHGDTLCTDDAGYQAFRAKVHKPWLQTLFLALPLFVRKRIAARMRANSKEANSSKSLAIMDVNQNAVVSAMEKHQVQWLIHGHTHRPAVHELIANQQPAFRVVLGAWHTEGSMVKVTADDVELIHFPF</sequence>
<feature type="chain" id="PRO_1000129517" description="UDP-2,3-diacylglucosamine hydrolase">
    <location>
        <begin position="1"/>
        <end position="240"/>
    </location>
</feature>
<feature type="binding site" evidence="1">
    <location>
        <position position="8"/>
    </location>
    <ligand>
        <name>Mn(2+)</name>
        <dbReference type="ChEBI" id="CHEBI:29035"/>
        <label>1</label>
    </ligand>
</feature>
<feature type="binding site" evidence="1">
    <location>
        <position position="10"/>
    </location>
    <ligand>
        <name>Mn(2+)</name>
        <dbReference type="ChEBI" id="CHEBI:29035"/>
        <label>1</label>
    </ligand>
</feature>
<feature type="binding site" evidence="1">
    <location>
        <position position="41"/>
    </location>
    <ligand>
        <name>Mn(2+)</name>
        <dbReference type="ChEBI" id="CHEBI:29035"/>
        <label>1</label>
    </ligand>
</feature>
<feature type="binding site" evidence="1">
    <location>
        <position position="41"/>
    </location>
    <ligand>
        <name>Mn(2+)</name>
        <dbReference type="ChEBI" id="CHEBI:29035"/>
        <label>2</label>
    </ligand>
</feature>
<feature type="binding site" evidence="1">
    <location>
        <begin position="79"/>
        <end position="80"/>
    </location>
    <ligand>
        <name>substrate</name>
    </ligand>
</feature>
<feature type="binding site" evidence="1">
    <location>
        <position position="79"/>
    </location>
    <ligand>
        <name>Mn(2+)</name>
        <dbReference type="ChEBI" id="CHEBI:29035"/>
        <label>2</label>
    </ligand>
</feature>
<feature type="binding site" evidence="1">
    <location>
        <position position="114"/>
    </location>
    <ligand>
        <name>Mn(2+)</name>
        <dbReference type="ChEBI" id="CHEBI:29035"/>
        <label>2</label>
    </ligand>
</feature>
<feature type="binding site" evidence="1">
    <location>
        <position position="122"/>
    </location>
    <ligand>
        <name>substrate</name>
    </ligand>
</feature>
<feature type="binding site" evidence="1">
    <location>
        <position position="160"/>
    </location>
    <ligand>
        <name>substrate</name>
    </ligand>
</feature>
<feature type="binding site" evidence="1">
    <location>
        <position position="164"/>
    </location>
    <ligand>
        <name>substrate</name>
    </ligand>
</feature>
<feature type="binding site" evidence="1">
    <location>
        <position position="167"/>
    </location>
    <ligand>
        <name>substrate</name>
    </ligand>
</feature>
<feature type="binding site" evidence="1">
    <location>
        <position position="195"/>
    </location>
    <ligand>
        <name>Mn(2+)</name>
        <dbReference type="ChEBI" id="CHEBI:29035"/>
        <label>2</label>
    </ligand>
</feature>
<feature type="binding site" evidence="1">
    <location>
        <position position="195"/>
    </location>
    <ligand>
        <name>substrate</name>
    </ligand>
</feature>
<feature type="binding site" evidence="1">
    <location>
        <position position="197"/>
    </location>
    <ligand>
        <name>Mn(2+)</name>
        <dbReference type="ChEBI" id="CHEBI:29035"/>
        <label>1</label>
    </ligand>
</feature>
<evidence type="ECO:0000255" key="1">
    <source>
        <dbReference type="HAMAP-Rule" id="MF_00575"/>
    </source>
</evidence>
<comment type="function">
    <text evidence="1">Hydrolyzes the pyrophosphate bond of UDP-2,3-diacylglucosamine to yield 2,3-diacylglucosamine 1-phosphate (lipid X) and UMP by catalyzing the attack of water at the alpha-P atom. Involved in the biosynthesis of lipid A, a phosphorylated glycolipid that anchors the lipopolysaccharide to the outer membrane of the cell.</text>
</comment>
<comment type="catalytic activity">
    <reaction evidence="1">
        <text>UDP-2-N,3-O-bis[(3R)-3-hydroxytetradecanoyl]-alpha-D-glucosamine + H2O = 2-N,3-O-bis[(3R)-3-hydroxytetradecanoyl]-alpha-D-glucosaminyl 1-phosphate + UMP + 2 H(+)</text>
        <dbReference type="Rhea" id="RHEA:25213"/>
        <dbReference type="ChEBI" id="CHEBI:15377"/>
        <dbReference type="ChEBI" id="CHEBI:15378"/>
        <dbReference type="ChEBI" id="CHEBI:57865"/>
        <dbReference type="ChEBI" id="CHEBI:57957"/>
        <dbReference type="ChEBI" id="CHEBI:78847"/>
        <dbReference type="EC" id="3.6.1.54"/>
    </reaction>
</comment>
<comment type="cofactor">
    <cofactor evidence="1">
        <name>Mn(2+)</name>
        <dbReference type="ChEBI" id="CHEBI:29035"/>
    </cofactor>
    <text evidence="1">Binds 2 Mn(2+) ions per subunit in a binuclear metal center.</text>
</comment>
<comment type="pathway">
    <text evidence="1">Glycolipid biosynthesis; lipid IV(A) biosynthesis; lipid IV(A) from (3R)-3-hydroxytetradecanoyl-[acyl-carrier-protein] and UDP-N-acetyl-alpha-D-glucosamine: step 4/6.</text>
</comment>
<comment type="subcellular location">
    <subcellularLocation>
        <location evidence="1">Cell inner membrane</location>
        <topology evidence="1">Peripheral membrane protein</topology>
        <orientation evidence="1">Cytoplasmic side</orientation>
    </subcellularLocation>
</comment>
<comment type="similarity">
    <text evidence="1">Belongs to the LpxH family.</text>
</comment>
<dbReference type="EC" id="3.6.1.54" evidence="1"/>
<dbReference type="EMBL" id="CU928161">
    <property type="protein sequence ID" value="CAR01869.1"/>
    <property type="molecule type" value="Genomic_DNA"/>
</dbReference>
<dbReference type="RefSeq" id="WP_000212244.1">
    <property type="nucleotide sequence ID" value="NC_011742.1"/>
</dbReference>
<dbReference type="SMR" id="B7ME47"/>
<dbReference type="KEGG" id="ecz:ECS88_0524"/>
<dbReference type="HOGENOM" id="CLU_074586_0_0_6"/>
<dbReference type="UniPathway" id="UPA00359">
    <property type="reaction ID" value="UER00480"/>
</dbReference>
<dbReference type="Proteomes" id="UP000000747">
    <property type="component" value="Chromosome"/>
</dbReference>
<dbReference type="GO" id="GO:0005737">
    <property type="term" value="C:cytoplasm"/>
    <property type="evidence" value="ECO:0007669"/>
    <property type="project" value="InterPro"/>
</dbReference>
<dbReference type="GO" id="GO:0019897">
    <property type="term" value="C:extrinsic component of plasma membrane"/>
    <property type="evidence" value="ECO:0007669"/>
    <property type="project" value="UniProtKB-UniRule"/>
</dbReference>
<dbReference type="GO" id="GO:0030145">
    <property type="term" value="F:manganese ion binding"/>
    <property type="evidence" value="ECO:0007669"/>
    <property type="project" value="UniProtKB-UniRule"/>
</dbReference>
<dbReference type="GO" id="GO:0008758">
    <property type="term" value="F:UDP-2,3-diacylglucosamine hydrolase activity"/>
    <property type="evidence" value="ECO:0007669"/>
    <property type="project" value="UniProtKB-UniRule"/>
</dbReference>
<dbReference type="GO" id="GO:0009245">
    <property type="term" value="P:lipid A biosynthetic process"/>
    <property type="evidence" value="ECO:0007669"/>
    <property type="project" value="UniProtKB-UniRule"/>
</dbReference>
<dbReference type="CDD" id="cd07398">
    <property type="entry name" value="MPP_YbbF-LpxH"/>
    <property type="match status" value="1"/>
</dbReference>
<dbReference type="FunFam" id="3.60.21.10:FF:000012">
    <property type="entry name" value="UDP-2,3-diacylglucosamine hydrolase"/>
    <property type="match status" value="1"/>
</dbReference>
<dbReference type="Gene3D" id="3.60.21.10">
    <property type="match status" value="1"/>
</dbReference>
<dbReference type="HAMAP" id="MF_00575">
    <property type="entry name" value="LpxH"/>
    <property type="match status" value="1"/>
</dbReference>
<dbReference type="InterPro" id="IPR004843">
    <property type="entry name" value="Calcineurin-like_PHP_ApaH"/>
</dbReference>
<dbReference type="InterPro" id="IPR043461">
    <property type="entry name" value="LpxH-like"/>
</dbReference>
<dbReference type="InterPro" id="IPR029052">
    <property type="entry name" value="Metallo-depent_PP-like"/>
</dbReference>
<dbReference type="InterPro" id="IPR010138">
    <property type="entry name" value="UDP-diacylglucosamine_Hdrlase"/>
</dbReference>
<dbReference type="NCBIfam" id="TIGR01854">
    <property type="entry name" value="lipid_A_lpxH"/>
    <property type="match status" value="1"/>
</dbReference>
<dbReference type="NCBIfam" id="NF003743">
    <property type="entry name" value="PRK05340.1"/>
    <property type="match status" value="1"/>
</dbReference>
<dbReference type="PANTHER" id="PTHR34990:SF1">
    <property type="entry name" value="UDP-2,3-DIACYLGLUCOSAMINE HYDROLASE"/>
    <property type="match status" value="1"/>
</dbReference>
<dbReference type="PANTHER" id="PTHR34990">
    <property type="entry name" value="UDP-2,3-DIACYLGLUCOSAMINE HYDROLASE-RELATED"/>
    <property type="match status" value="1"/>
</dbReference>
<dbReference type="Pfam" id="PF00149">
    <property type="entry name" value="Metallophos"/>
    <property type="match status" value="1"/>
</dbReference>
<dbReference type="SUPFAM" id="SSF56300">
    <property type="entry name" value="Metallo-dependent phosphatases"/>
    <property type="match status" value="1"/>
</dbReference>
<accession>B7ME47</accession>
<proteinExistence type="inferred from homology"/>